<comment type="function">
    <text evidence="1">Promotes RNA polymerase assembly. Latches the N- and C-terminal regions of the beta' subunit thereby facilitating its interaction with the beta and alpha subunits.</text>
</comment>
<comment type="catalytic activity">
    <reaction evidence="1">
        <text>RNA(n) + a ribonucleoside 5'-triphosphate = RNA(n+1) + diphosphate</text>
        <dbReference type="Rhea" id="RHEA:21248"/>
        <dbReference type="Rhea" id="RHEA-COMP:14527"/>
        <dbReference type="Rhea" id="RHEA-COMP:17342"/>
        <dbReference type="ChEBI" id="CHEBI:33019"/>
        <dbReference type="ChEBI" id="CHEBI:61557"/>
        <dbReference type="ChEBI" id="CHEBI:140395"/>
        <dbReference type="EC" id="2.7.7.6"/>
    </reaction>
</comment>
<comment type="subunit">
    <text evidence="1">The RNAP catalytic core consists of 2 alpha, 1 beta, 1 beta' and 1 omega subunit. When a sigma factor is associated with the core the holoenzyme is formed, which can initiate transcription.</text>
</comment>
<comment type="similarity">
    <text evidence="1">Belongs to the RNA polymerase subunit omega family.</text>
</comment>
<keyword id="KW-0240">DNA-directed RNA polymerase</keyword>
<keyword id="KW-0548">Nucleotidyltransferase</keyword>
<keyword id="KW-0804">Transcription</keyword>
<keyword id="KW-0808">Transferase</keyword>
<name>RPOZ_STRPS</name>
<proteinExistence type="inferred from homology"/>
<sequence length="104" mass="11940">MMLKPSIDTLLDKVPSKYSLVILEAKRAHELEAGAPATQGFKSEKSTLRALEEIESGNVTIHLDPEGKREAVRRRIEEEKRRKEEEEKKIKEQIAKEKEDGEKI</sequence>
<reference key="1">
    <citation type="journal article" date="2009" name="BMC Genomics">
        <title>Genome evolution driven by host adaptations results in a more virulent and antimicrobial-resistant Streptococcus pneumoniae serotype 14.</title>
        <authorList>
            <person name="Ding F."/>
            <person name="Tang P."/>
            <person name="Hsu M.-H."/>
            <person name="Cui P."/>
            <person name="Hu S."/>
            <person name="Yu J."/>
            <person name="Chiu C.-H."/>
        </authorList>
    </citation>
    <scope>NUCLEOTIDE SEQUENCE [LARGE SCALE GENOMIC DNA]</scope>
    <source>
        <strain>CGSP14</strain>
    </source>
</reference>
<evidence type="ECO:0000255" key="1">
    <source>
        <dbReference type="HAMAP-Rule" id="MF_00366"/>
    </source>
</evidence>
<evidence type="ECO:0000256" key="2">
    <source>
        <dbReference type="SAM" id="MobiDB-lite"/>
    </source>
</evidence>
<organism>
    <name type="scientific">Streptococcus pneumoniae (strain CGSP14)</name>
    <dbReference type="NCBI Taxonomy" id="516950"/>
    <lineage>
        <taxon>Bacteria</taxon>
        <taxon>Bacillati</taxon>
        <taxon>Bacillota</taxon>
        <taxon>Bacilli</taxon>
        <taxon>Lactobacillales</taxon>
        <taxon>Streptococcaceae</taxon>
        <taxon>Streptococcus</taxon>
    </lineage>
</organism>
<protein>
    <recommendedName>
        <fullName evidence="1">DNA-directed RNA polymerase subunit omega</fullName>
        <shortName evidence="1">RNAP omega subunit</shortName>
        <ecNumber evidence="1">2.7.7.6</ecNumber>
    </recommendedName>
    <alternativeName>
        <fullName evidence="1">RNA polymerase omega subunit</fullName>
    </alternativeName>
    <alternativeName>
        <fullName evidence="1">Transcriptase subunit omega</fullName>
    </alternativeName>
</protein>
<feature type="chain" id="PRO_1000121281" description="DNA-directed RNA polymerase subunit omega">
    <location>
        <begin position="1"/>
        <end position="104"/>
    </location>
</feature>
<feature type="region of interest" description="Disordered" evidence="2">
    <location>
        <begin position="76"/>
        <end position="104"/>
    </location>
</feature>
<gene>
    <name evidence="1" type="primary">rpoZ</name>
    <name type="ordered locus">SPCG_1711</name>
</gene>
<accession>B2IS88</accession>
<dbReference type="EC" id="2.7.7.6" evidence="1"/>
<dbReference type="EMBL" id="CP001033">
    <property type="protein sequence ID" value="ACB90963.1"/>
    <property type="molecule type" value="Genomic_DNA"/>
</dbReference>
<dbReference type="RefSeq" id="WP_001817694.1">
    <property type="nucleotide sequence ID" value="NC_010582.1"/>
</dbReference>
<dbReference type="SMR" id="B2IS88"/>
<dbReference type="KEGG" id="spw:SPCG_1711"/>
<dbReference type="HOGENOM" id="CLU_125406_0_0_9"/>
<dbReference type="GO" id="GO:0000428">
    <property type="term" value="C:DNA-directed RNA polymerase complex"/>
    <property type="evidence" value="ECO:0007669"/>
    <property type="project" value="UniProtKB-KW"/>
</dbReference>
<dbReference type="GO" id="GO:0003677">
    <property type="term" value="F:DNA binding"/>
    <property type="evidence" value="ECO:0007669"/>
    <property type="project" value="UniProtKB-UniRule"/>
</dbReference>
<dbReference type="GO" id="GO:0003899">
    <property type="term" value="F:DNA-directed RNA polymerase activity"/>
    <property type="evidence" value="ECO:0007669"/>
    <property type="project" value="UniProtKB-UniRule"/>
</dbReference>
<dbReference type="GO" id="GO:0006351">
    <property type="term" value="P:DNA-templated transcription"/>
    <property type="evidence" value="ECO:0007669"/>
    <property type="project" value="UniProtKB-UniRule"/>
</dbReference>
<dbReference type="Gene3D" id="3.90.940.10">
    <property type="match status" value="1"/>
</dbReference>
<dbReference type="HAMAP" id="MF_00366">
    <property type="entry name" value="RNApol_bact_RpoZ"/>
    <property type="match status" value="1"/>
</dbReference>
<dbReference type="InterPro" id="IPR003716">
    <property type="entry name" value="DNA-dir_RNA_pol_omega"/>
</dbReference>
<dbReference type="InterPro" id="IPR006110">
    <property type="entry name" value="Pol_omega/Rpo6/RPB6"/>
</dbReference>
<dbReference type="InterPro" id="IPR036161">
    <property type="entry name" value="RPB6/omega-like_sf"/>
</dbReference>
<dbReference type="NCBIfam" id="TIGR00690">
    <property type="entry name" value="rpoZ"/>
    <property type="match status" value="1"/>
</dbReference>
<dbReference type="PANTHER" id="PTHR34476">
    <property type="entry name" value="DNA-DIRECTED RNA POLYMERASE SUBUNIT OMEGA"/>
    <property type="match status" value="1"/>
</dbReference>
<dbReference type="PANTHER" id="PTHR34476:SF1">
    <property type="entry name" value="DNA-DIRECTED RNA POLYMERASE SUBUNIT OMEGA"/>
    <property type="match status" value="1"/>
</dbReference>
<dbReference type="Pfam" id="PF01192">
    <property type="entry name" value="RNA_pol_Rpb6"/>
    <property type="match status" value="1"/>
</dbReference>
<dbReference type="SMART" id="SM01409">
    <property type="entry name" value="RNA_pol_Rpb6"/>
    <property type="match status" value="1"/>
</dbReference>
<dbReference type="SUPFAM" id="SSF63562">
    <property type="entry name" value="RPB6/omega subunit-like"/>
    <property type="match status" value="1"/>
</dbReference>